<keyword id="KW-0963">Cytoplasm</keyword>
<keyword id="KW-0489">Methyltransferase</keyword>
<keyword id="KW-0694">RNA-binding</keyword>
<keyword id="KW-0698">rRNA processing</keyword>
<keyword id="KW-0949">S-adenosyl-L-methionine</keyword>
<keyword id="KW-0808">Transferase</keyword>
<sequence length="294" mass="32957">MANNIPIGSAVRTQVIINRYFVKAKKNLGQNFLIDQNAILGIVEAADIHAGDQVIEIGPGIGSLTEQLLLAGAKVFAYEVDDSLPEILQNELPKKIGDAPLEDRFKLMLKDVLKANFKEDLAGFFDMSKPIKVVANLPYYITTPIIFALAESDLHFASLTLMMQKEVAERLEAKPGSKEYGPLTISVQTEMDVKVALEVNHNSFMPRPKVDSSVVVLTPLKNKPEIENRKHFVWVVKMCFSQRRKTLNNNLKTLIPDSEKREALIKKLGVDPRVRPENLTIEQFIEIARNIPAK</sequence>
<accession>A8YX55</accession>
<name>RSMA_LACH4</name>
<dbReference type="EC" id="2.1.1.182" evidence="1"/>
<dbReference type="EMBL" id="CP000517">
    <property type="protein sequence ID" value="ABX26478.1"/>
    <property type="molecule type" value="Genomic_DNA"/>
</dbReference>
<dbReference type="RefSeq" id="WP_012211332.1">
    <property type="nucleotide sequence ID" value="NC_010080.1"/>
</dbReference>
<dbReference type="SMR" id="A8YX55"/>
<dbReference type="KEGG" id="lhe:lhv_0232"/>
<dbReference type="eggNOG" id="COG0030">
    <property type="taxonomic scope" value="Bacteria"/>
</dbReference>
<dbReference type="HOGENOM" id="CLU_041220_0_0_9"/>
<dbReference type="Proteomes" id="UP000000790">
    <property type="component" value="Chromosome"/>
</dbReference>
<dbReference type="GO" id="GO:0005829">
    <property type="term" value="C:cytosol"/>
    <property type="evidence" value="ECO:0007669"/>
    <property type="project" value="TreeGrafter"/>
</dbReference>
<dbReference type="GO" id="GO:0052908">
    <property type="term" value="F:16S rRNA (adenine(1518)-N(6)/adenine(1519)-N(6))-dimethyltransferase activity"/>
    <property type="evidence" value="ECO:0007669"/>
    <property type="project" value="UniProtKB-EC"/>
</dbReference>
<dbReference type="GO" id="GO:0003723">
    <property type="term" value="F:RNA binding"/>
    <property type="evidence" value="ECO:0007669"/>
    <property type="project" value="UniProtKB-KW"/>
</dbReference>
<dbReference type="FunFam" id="1.10.8.100:FF:000001">
    <property type="entry name" value="Ribosomal RNA small subunit methyltransferase A"/>
    <property type="match status" value="1"/>
</dbReference>
<dbReference type="FunFam" id="3.40.50.150:FF:000023">
    <property type="entry name" value="Ribosomal RNA small subunit methyltransferase A"/>
    <property type="match status" value="1"/>
</dbReference>
<dbReference type="Gene3D" id="1.10.8.100">
    <property type="entry name" value="Ribosomal RNA adenine dimethylase-like, domain 2"/>
    <property type="match status" value="1"/>
</dbReference>
<dbReference type="Gene3D" id="3.40.50.150">
    <property type="entry name" value="Vaccinia Virus protein VP39"/>
    <property type="match status" value="1"/>
</dbReference>
<dbReference type="HAMAP" id="MF_00607">
    <property type="entry name" value="16SrRNA_methyltr_A"/>
    <property type="match status" value="1"/>
</dbReference>
<dbReference type="InterPro" id="IPR001737">
    <property type="entry name" value="KsgA/Erm"/>
</dbReference>
<dbReference type="InterPro" id="IPR023165">
    <property type="entry name" value="rRNA_Ade_diMease-like_C"/>
</dbReference>
<dbReference type="InterPro" id="IPR020596">
    <property type="entry name" value="rRNA_Ade_Mease_Trfase_CS"/>
</dbReference>
<dbReference type="InterPro" id="IPR020598">
    <property type="entry name" value="rRNA_Ade_methylase_Trfase_N"/>
</dbReference>
<dbReference type="InterPro" id="IPR011530">
    <property type="entry name" value="rRNA_adenine_dimethylase"/>
</dbReference>
<dbReference type="InterPro" id="IPR029063">
    <property type="entry name" value="SAM-dependent_MTases_sf"/>
</dbReference>
<dbReference type="NCBIfam" id="TIGR00755">
    <property type="entry name" value="ksgA"/>
    <property type="match status" value="1"/>
</dbReference>
<dbReference type="PANTHER" id="PTHR11727">
    <property type="entry name" value="DIMETHYLADENOSINE TRANSFERASE"/>
    <property type="match status" value="1"/>
</dbReference>
<dbReference type="PANTHER" id="PTHR11727:SF7">
    <property type="entry name" value="DIMETHYLADENOSINE TRANSFERASE-RELATED"/>
    <property type="match status" value="1"/>
</dbReference>
<dbReference type="Pfam" id="PF00398">
    <property type="entry name" value="RrnaAD"/>
    <property type="match status" value="1"/>
</dbReference>
<dbReference type="SMART" id="SM00650">
    <property type="entry name" value="rADc"/>
    <property type="match status" value="1"/>
</dbReference>
<dbReference type="SUPFAM" id="SSF53335">
    <property type="entry name" value="S-adenosyl-L-methionine-dependent methyltransferases"/>
    <property type="match status" value="1"/>
</dbReference>
<dbReference type="PROSITE" id="PS01131">
    <property type="entry name" value="RRNA_A_DIMETH"/>
    <property type="match status" value="1"/>
</dbReference>
<dbReference type="PROSITE" id="PS51689">
    <property type="entry name" value="SAM_RNA_A_N6_MT"/>
    <property type="match status" value="1"/>
</dbReference>
<feature type="chain" id="PRO_1000072650" description="Ribosomal RNA small subunit methyltransferase A">
    <location>
        <begin position="1"/>
        <end position="294"/>
    </location>
</feature>
<feature type="binding site" evidence="1">
    <location>
        <position position="31"/>
    </location>
    <ligand>
        <name>S-adenosyl-L-methionine</name>
        <dbReference type="ChEBI" id="CHEBI:59789"/>
    </ligand>
</feature>
<feature type="binding site" evidence="1">
    <location>
        <position position="33"/>
    </location>
    <ligand>
        <name>S-adenosyl-L-methionine</name>
        <dbReference type="ChEBI" id="CHEBI:59789"/>
    </ligand>
</feature>
<feature type="binding site" evidence="1">
    <location>
        <position position="58"/>
    </location>
    <ligand>
        <name>S-adenosyl-L-methionine</name>
        <dbReference type="ChEBI" id="CHEBI:59789"/>
    </ligand>
</feature>
<feature type="binding site" evidence="1">
    <location>
        <position position="79"/>
    </location>
    <ligand>
        <name>S-adenosyl-L-methionine</name>
        <dbReference type="ChEBI" id="CHEBI:59789"/>
    </ligand>
</feature>
<feature type="binding site" evidence="1">
    <location>
        <position position="111"/>
    </location>
    <ligand>
        <name>S-adenosyl-L-methionine</name>
        <dbReference type="ChEBI" id="CHEBI:59789"/>
    </ligand>
</feature>
<feature type="binding site" evidence="1">
    <location>
        <position position="136"/>
    </location>
    <ligand>
        <name>S-adenosyl-L-methionine</name>
        <dbReference type="ChEBI" id="CHEBI:59789"/>
    </ligand>
</feature>
<protein>
    <recommendedName>
        <fullName evidence="1">Ribosomal RNA small subunit methyltransferase A</fullName>
        <ecNumber evidence="1">2.1.1.182</ecNumber>
    </recommendedName>
    <alternativeName>
        <fullName evidence="1">16S rRNA (adenine(1518)-N(6)/adenine(1519)-N(6))-dimethyltransferase</fullName>
    </alternativeName>
    <alternativeName>
        <fullName evidence="1">16S rRNA dimethyladenosine transferase</fullName>
    </alternativeName>
    <alternativeName>
        <fullName evidence="1">16S rRNA dimethylase</fullName>
    </alternativeName>
    <alternativeName>
        <fullName evidence="1">S-adenosylmethionine-6-N', N'-adenosyl(rRNA) dimethyltransferase</fullName>
    </alternativeName>
</protein>
<organism>
    <name type="scientific">Lactobacillus helveticus (strain DPC 4571)</name>
    <dbReference type="NCBI Taxonomy" id="405566"/>
    <lineage>
        <taxon>Bacteria</taxon>
        <taxon>Bacillati</taxon>
        <taxon>Bacillota</taxon>
        <taxon>Bacilli</taxon>
        <taxon>Lactobacillales</taxon>
        <taxon>Lactobacillaceae</taxon>
        <taxon>Lactobacillus</taxon>
    </lineage>
</organism>
<reference key="1">
    <citation type="journal article" date="2008" name="J. Bacteriol.">
        <title>Genome sequence of Lactobacillus helveticus: an organism distinguished by selective gene loss and IS element expansion.</title>
        <authorList>
            <person name="Callanan M."/>
            <person name="Kaleta P."/>
            <person name="O'Callaghan J."/>
            <person name="O'Sullivan O."/>
            <person name="Jordan K."/>
            <person name="McAuliffe O."/>
            <person name="Sangrador-Vegas A."/>
            <person name="Slattery L."/>
            <person name="Fitzgerald G.F."/>
            <person name="Beresford T."/>
            <person name="Ross R.P."/>
        </authorList>
    </citation>
    <scope>NUCLEOTIDE SEQUENCE [LARGE SCALE GENOMIC DNA]</scope>
    <source>
        <strain>DPC 4571</strain>
    </source>
</reference>
<proteinExistence type="inferred from homology"/>
<comment type="function">
    <text evidence="1">Specifically dimethylates two adjacent adenosines (A1518 and A1519) in the loop of a conserved hairpin near the 3'-end of 16S rRNA in the 30S particle. May play a critical role in biogenesis of 30S subunits.</text>
</comment>
<comment type="catalytic activity">
    <reaction evidence="1">
        <text>adenosine(1518)/adenosine(1519) in 16S rRNA + 4 S-adenosyl-L-methionine = N(6)-dimethyladenosine(1518)/N(6)-dimethyladenosine(1519) in 16S rRNA + 4 S-adenosyl-L-homocysteine + 4 H(+)</text>
        <dbReference type="Rhea" id="RHEA:19609"/>
        <dbReference type="Rhea" id="RHEA-COMP:10232"/>
        <dbReference type="Rhea" id="RHEA-COMP:10233"/>
        <dbReference type="ChEBI" id="CHEBI:15378"/>
        <dbReference type="ChEBI" id="CHEBI:57856"/>
        <dbReference type="ChEBI" id="CHEBI:59789"/>
        <dbReference type="ChEBI" id="CHEBI:74411"/>
        <dbReference type="ChEBI" id="CHEBI:74493"/>
        <dbReference type="EC" id="2.1.1.182"/>
    </reaction>
</comment>
<comment type="subcellular location">
    <subcellularLocation>
        <location evidence="1">Cytoplasm</location>
    </subcellularLocation>
</comment>
<comment type="similarity">
    <text evidence="1">Belongs to the class I-like SAM-binding methyltransferase superfamily. rRNA adenine N(6)-methyltransferase family. RsmA subfamily.</text>
</comment>
<gene>
    <name evidence="1" type="primary">rsmA</name>
    <name evidence="1" type="synonym">ksgA</name>
    <name type="ordered locus">lhv_0232</name>
</gene>
<evidence type="ECO:0000255" key="1">
    <source>
        <dbReference type="HAMAP-Rule" id="MF_00607"/>
    </source>
</evidence>